<proteinExistence type="inferred from homology"/>
<gene>
    <name evidence="1" type="primary">argO</name>
    <name type="ordered locus">YPO0918</name>
    <name type="ordered locus">y3305</name>
    <name type="ordered locus">YP_3522</name>
</gene>
<reference key="1">
    <citation type="journal article" date="2001" name="Nature">
        <title>Genome sequence of Yersinia pestis, the causative agent of plague.</title>
        <authorList>
            <person name="Parkhill J."/>
            <person name="Wren B.W."/>
            <person name="Thomson N.R."/>
            <person name="Titball R.W."/>
            <person name="Holden M.T.G."/>
            <person name="Prentice M.B."/>
            <person name="Sebaihia M."/>
            <person name="James K.D."/>
            <person name="Churcher C.M."/>
            <person name="Mungall K.L."/>
            <person name="Baker S."/>
            <person name="Basham D."/>
            <person name="Bentley S.D."/>
            <person name="Brooks K."/>
            <person name="Cerdeno-Tarraga A.-M."/>
            <person name="Chillingworth T."/>
            <person name="Cronin A."/>
            <person name="Davies R.M."/>
            <person name="Davis P."/>
            <person name="Dougan G."/>
            <person name="Feltwell T."/>
            <person name="Hamlin N."/>
            <person name="Holroyd S."/>
            <person name="Jagels K."/>
            <person name="Karlyshev A.V."/>
            <person name="Leather S."/>
            <person name="Moule S."/>
            <person name="Oyston P.C.F."/>
            <person name="Quail M.A."/>
            <person name="Rutherford K.M."/>
            <person name="Simmonds M."/>
            <person name="Skelton J."/>
            <person name="Stevens K."/>
            <person name="Whitehead S."/>
            <person name="Barrell B.G."/>
        </authorList>
    </citation>
    <scope>NUCLEOTIDE SEQUENCE [LARGE SCALE GENOMIC DNA]</scope>
    <source>
        <strain>CO-92 / Biovar Orientalis</strain>
    </source>
</reference>
<reference key="2">
    <citation type="journal article" date="2002" name="J. Bacteriol.">
        <title>Genome sequence of Yersinia pestis KIM.</title>
        <authorList>
            <person name="Deng W."/>
            <person name="Burland V."/>
            <person name="Plunkett G. III"/>
            <person name="Boutin A."/>
            <person name="Mayhew G.F."/>
            <person name="Liss P."/>
            <person name="Perna N.T."/>
            <person name="Rose D.J."/>
            <person name="Mau B."/>
            <person name="Zhou S."/>
            <person name="Schwartz D.C."/>
            <person name="Fetherston J.D."/>
            <person name="Lindler L.E."/>
            <person name="Brubaker R.R."/>
            <person name="Plano G.V."/>
            <person name="Straley S.C."/>
            <person name="McDonough K.A."/>
            <person name="Nilles M.L."/>
            <person name="Matson J.S."/>
            <person name="Blattner F.R."/>
            <person name="Perry R.D."/>
        </authorList>
    </citation>
    <scope>NUCLEOTIDE SEQUENCE [LARGE SCALE GENOMIC DNA]</scope>
    <source>
        <strain>KIM10+ / Biovar Mediaevalis</strain>
    </source>
</reference>
<reference key="3">
    <citation type="journal article" date="2004" name="DNA Res.">
        <title>Complete genome sequence of Yersinia pestis strain 91001, an isolate avirulent to humans.</title>
        <authorList>
            <person name="Song Y."/>
            <person name="Tong Z."/>
            <person name="Wang J."/>
            <person name="Wang L."/>
            <person name="Guo Z."/>
            <person name="Han Y."/>
            <person name="Zhang J."/>
            <person name="Pei D."/>
            <person name="Zhou D."/>
            <person name="Qin H."/>
            <person name="Pang X."/>
            <person name="Han Y."/>
            <person name="Zhai J."/>
            <person name="Li M."/>
            <person name="Cui B."/>
            <person name="Qi Z."/>
            <person name="Jin L."/>
            <person name="Dai R."/>
            <person name="Chen F."/>
            <person name="Li S."/>
            <person name="Ye C."/>
            <person name="Du Z."/>
            <person name="Lin W."/>
            <person name="Wang J."/>
            <person name="Yu J."/>
            <person name="Yang H."/>
            <person name="Wang J."/>
            <person name="Huang P."/>
            <person name="Yang R."/>
        </authorList>
    </citation>
    <scope>NUCLEOTIDE SEQUENCE [LARGE SCALE GENOMIC DNA]</scope>
    <source>
        <strain>91001 / Biovar Mediaevalis</strain>
    </source>
</reference>
<sequence>MLAVYLHGFILSAAMILPLGPQNVFVMNQGIKRQHHLMSASLCALSDIILICAGIFGGSALLSRSPLLLALVTWGGVAFLMWYGWGALMAAWRGDGVASSATSVTQGRWRILVTLLAVTWLNPHVYLDTFVVLGSLGGQLLPDIRPWFALGAVTASIVWFFALALLAAWLSPWLNRPVAQRIINLFVGGVMGFIAFQLARQGFGL</sequence>
<organism>
    <name type="scientific">Yersinia pestis</name>
    <dbReference type="NCBI Taxonomy" id="632"/>
    <lineage>
        <taxon>Bacteria</taxon>
        <taxon>Pseudomonadati</taxon>
        <taxon>Pseudomonadota</taxon>
        <taxon>Gammaproteobacteria</taxon>
        <taxon>Enterobacterales</taxon>
        <taxon>Yersiniaceae</taxon>
        <taxon>Yersinia</taxon>
    </lineage>
</organism>
<comment type="function">
    <text evidence="1">Involved in the export of arginine. Important to control the intracellular level of arginine and the correct balance between arginine and lysine.</text>
</comment>
<comment type="catalytic activity">
    <reaction evidence="1">
        <text>L-arginine(in) = L-arginine(out)</text>
        <dbReference type="Rhea" id="RHEA:32143"/>
        <dbReference type="ChEBI" id="CHEBI:32682"/>
    </reaction>
    <physiologicalReaction direction="left-to-right" evidence="1">
        <dbReference type="Rhea" id="RHEA:32144"/>
    </physiologicalReaction>
</comment>
<comment type="subcellular location">
    <subcellularLocation>
        <location evidence="1">Cell inner membrane</location>
        <topology evidence="1">Multi-pass membrane protein</topology>
    </subcellularLocation>
</comment>
<comment type="miscellaneous">
    <text>In Yersinia pestis biovar Mediaevails str. 91001, the CDS has been disrupted by IS100 element.</text>
</comment>
<comment type="similarity">
    <text evidence="1 2">Belongs to the LysE/ArgO transporter (TC 2.A.75) family.</text>
</comment>
<comment type="caution">
    <text evidence="2">PubMed:15368893 (AE017042) sequence differs from that shown due to the presence of an IS100 insertion sequence. This gene in strain 91001 is probably a pseudogene.</text>
</comment>
<accession>Q8ZHH6</accession>
<accession>Q0WIC2</accession>
<accession>Q7CGS7</accession>
<evidence type="ECO:0000255" key="1">
    <source>
        <dbReference type="HAMAP-Rule" id="MF_01901"/>
    </source>
</evidence>
<evidence type="ECO:0000305" key="2"/>
<dbReference type="EMBL" id="AL590842">
    <property type="protein sequence ID" value="CAL19585.1"/>
    <property type="molecule type" value="Genomic_DNA"/>
</dbReference>
<dbReference type="EMBL" id="AE009952">
    <property type="protein sequence ID" value="AAM86855.1"/>
    <property type="molecule type" value="Genomic_DNA"/>
</dbReference>
<dbReference type="EMBL" id="AE017042">
    <property type="status" value="NOT_ANNOTATED_CDS"/>
    <property type="molecule type" value="Genomic_DNA"/>
</dbReference>
<dbReference type="PIR" id="AG0112">
    <property type="entry name" value="AG0112"/>
</dbReference>
<dbReference type="RefSeq" id="WP_002209960.1">
    <property type="nucleotide sequence ID" value="NZ_WUCM01000038.1"/>
</dbReference>
<dbReference type="RefSeq" id="YP_002345966.1">
    <property type="nucleotide sequence ID" value="NC_003143.1"/>
</dbReference>
<dbReference type="STRING" id="214092.YPO0918"/>
<dbReference type="PaxDb" id="214092-YPO0918"/>
<dbReference type="DNASU" id="1148252"/>
<dbReference type="GeneID" id="57973722"/>
<dbReference type="KEGG" id="ype:YPO0918"/>
<dbReference type="KEGG" id="ypk:y3305"/>
<dbReference type="PATRIC" id="fig|214092.21.peg.1193"/>
<dbReference type="eggNOG" id="COG1279">
    <property type="taxonomic scope" value="Bacteria"/>
</dbReference>
<dbReference type="HOGENOM" id="CLU_087840_0_1_6"/>
<dbReference type="OMA" id="YIAPIGM"/>
<dbReference type="OrthoDB" id="5638726at2"/>
<dbReference type="Proteomes" id="UP000000815">
    <property type="component" value="Chromosome"/>
</dbReference>
<dbReference type="Proteomes" id="UP000001019">
    <property type="component" value="Chromosome"/>
</dbReference>
<dbReference type="Proteomes" id="UP000002490">
    <property type="component" value="Chromosome"/>
</dbReference>
<dbReference type="GO" id="GO:0005886">
    <property type="term" value="C:plasma membrane"/>
    <property type="evidence" value="ECO:0000318"/>
    <property type="project" value="GO_Central"/>
</dbReference>
<dbReference type="GO" id="GO:0015171">
    <property type="term" value="F:amino acid transmembrane transporter activity"/>
    <property type="evidence" value="ECO:0000318"/>
    <property type="project" value="GO_Central"/>
</dbReference>
<dbReference type="GO" id="GO:0061459">
    <property type="term" value="F:L-arginine transmembrane transporter activity"/>
    <property type="evidence" value="ECO:0007669"/>
    <property type="project" value="UniProtKB-UniRule"/>
</dbReference>
<dbReference type="GO" id="GO:0006865">
    <property type="term" value="P:amino acid transport"/>
    <property type="evidence" value="ECO:0000318"/>
    <property type="project" value="GO_Central"/>
</dbReference>
<dbReference type="HAMAP" id="MF_01901">
    <property type="entry name" value="ArgO"/>
    <property type="match status" value="1"/>
</dbReference>
<dbReference type="InterPro" id="IPR023445">
    <property type="entry name" value="Arg_export_ArgO_enterobac"/>
</dbReference>
<dbReference type="InterPro" id="IPR001123">
    <property type="entry name" value="LeuE-type"/>
</dbReference>
<dbReference type="InterPro" id="IPR004777">
    <property type="entry name" value="Lys/arg_exporter"/>
</dbReference>
<dbReference type="NCBIfam" id="TIGR00948">
    <property type="entry name" value="2a75"/>
    <property type="match status" value="1"/>
</dbReference>
<dbReference type="NCBIfam" id="NF006801">
    <property type="entry name" value="PRK09304.1"/>
    <property type="match status" value="1"/>
</dbReference>
<dbReference type="PANTHER" id="PTHR30086">
    <property type="entry name" value="ARGININE EXPORTER PROTEIN ARGO"/>
    <property type="match status" value="1"/>
</dbReference>
<dbReference type="PANTHER" id="PTHR30086:SF20">
    <property type="entry name" value="ARGININE EXPORTER PROTEIN ARGO-RELATED"/>
    <property type="match status" value="1"/>
</dbReference>
<dbReference type="Pfam" id="PF01810">
    <property type="entry name" value="LysE"/>
    <property type="match status" value="1"/>
</dbReference>
<protein>
    <recommendedName>
        <fullName evidence="1">Arginine exporter protein ArgO</fullName>
    </recommendedName>
</protein>
<name>ARGO_YERPE</name>
<keyword id="KW-0029">Amino-acid transport</keyword>
<keyword id="KW-0997">Cell inner membrane</keyword>
<keyword id="KW-1003">Cell membrane</keyword>
<keyword id="KW-0472">Membrane</keyword>
<keyword id="KW-1185">Reference proteome</keyword>
<keyword id="KW-0812">Transmembrane</keyword>
<keyword id="KW-1133">Transmembrane helix</keyword>
<keyword id="KW-0813">Transport</keyword>
<feature type="chain" id="PRO_0000204168" description="Arginine exporter protein ArgO">
    <location>
        <begin position="1"/>
        <end position="205"/>
    </location>
</feature>
<feature type="transmembrane region" description="Helical" evidence="1">
    <location>
        <begin position="1"/>
        <end position="21"/>
    </location>
</feature>
<feature type="transmembrane region" description="Helical" evidence="1">
    <location>
        <begin position="42"/>
        <end position="62"/>
    </location>
</feature>
<feature type="transmembrane region" description="Helical" evidence="1">
    <location>
        <begin position="67"/>
        <end position="87"/>
    </location>
</feature>
<feature type="transmembrane region" description="Helical" evidence="1">
    <location>
        <begin position="111"/>
        <end position="131"/>
    </location>
</feature>
<feature type="transmembrane region" description="Helical" evidence="1">
    <location>
        <begin position="147"/>
        <end position="167"/>
    </location>
</feature>
<feature type="transmembrane region" description="Helical" evidence="1">
    <location>
        <begin position="185"/>
        <end position="205"/>
    </location>
</feature>